<sequence>MIMWQSLILISSGAALGASLRWGMGLILNPLFAAFSFGTLIANYLGCFIIGLIMAMIWQHPQFSGEWRLFMITGFLGSLTTFSSFSAEVMENFIQQKWLIGLGIMSAHLFGCLIFTGIGVLITRWLN</sequence>
<evidence type="ECO:0000255" key="1">
    <source>
        <dbReference type="HAMAP-Rule" id="MF_00454"/>
    </source>
</evidence>
<reference key="1">
    <citation type="journal article" date="2004" name="Nat. Biotechnol.">
        <title>The genome sequence of the capnophilic rumen bacterium Mannheimia succiniciproducens.</title>
        <authorList>
            <person name="Hong S.H."/>
            <person name="Kim J.S."/>
            <person name="Lee S.Y."/>
            <person name="In Y.H."/>
            <person name="Choi S.S."/>
            <person name="Rih J.-K."/>
            <person name="Kim C.H."/>
            <person name="Jeong H."/>
            <person name="Hur C.G."/>
            <person name="Kim J.J."/>
        </authorList>
    </citation>
    <scope>NUCLEOTIDE SEQUENCE [LARGE SCALE GENOMIC DNA]</scope>
    <source>
        <strain>KCTC 0769BP / MBEL55E</strain>
    </source>
</reference>
<feature type="chain" id="PRO_0000110131" description="Fluoride-specific ion channel FluC">
    <location>
        <begin position="1"/>
        <end position="127"/>
    </location>
</feature>
<feature type="transmembrane region" description="Helical" evidence="1">
    <location>
        <begin position="7"/>
        <end position="27"/>
    </location>
</feature>
<feature type="transmembrane region" description="Helical" evidence="1">
    <location>
        <begin position="37"/>
        <end position="57"/>
    </location>
</feature>
<feature type="transmembrane region" description="Helical" evidence="1">
    <location>
        <begin position="69"/>
        <end position="89"/>
    </location>
</feature>
<feature type="transmembrane region" description="Helical" evidence="1">
    <location>
        <begin position="102"/>
        <end position="122"/>
    </location>
</feature>
<feature type="binding site" evidence="1">
    <location>
        <position position="77"/>
    </location>
    <ligand>
        <name>Na(+)</name>
        <dbReference type="ChEBI" id="CHEBI:29101"/>
        <note>structural</note>
    </ligand>
</feature>
<feature type="binding site" evidence="1">
    <location>
        <position position="80"/>
    </location>
    <ligand>
        <name>Na(+)</name>
        <dbReference type="ChEBI" id="CHEBI:29101"/>
        <note>structural</note>
    </ligand>
</feature>
<organism>
    <name type="scientific">Mannheimia succiniciproducens (strain KCTC 0769BP / MBEL55E)</name>
    <dbReference type="NCBI Taxonomy" id="221988"/>
    <lineage>
        <taxon>Bacteria</taxon>
        <taxon>Pseudomonadati</taxon>
        <taxon>Pseudomonadota</taxon>
        <taxon>Gammaproteobacteria</taxon>
        <taxon>Pasteurellales</taxon>
        <taxon>Pasteurellaceae</taxon>
        <taxon>Basfia</taxon>
    </lineage>
</organism>
<comment type="function">
    <text evidence="1">Fluoride-specific ion channel. Important for reducing fluoride concentration in the cell, thus reducing its toxicity.</text>
</comment>
<comment type="catalytic activity">
    <reaction evidence="1">
        <text>fluoride(in) = fluoride(out)</text>
        <dbReference type="Rhea" id="RHEA:76159"/>
        <dbReference type="ChEBI" id="CHEBI:17051"/>
    </reaction>
    <physiologicalReaction direction="left-to-right" evidence="1">
        <dbReference type="Rhea" id="RHEA:76160"/>
    </physiologicalReaction>
</comment>
<comment type="activity regulation">
    <text evidence="1">Na(+) is not transported, but it plays an essential structural role and its presence is essential for fluoride channel function.</text>
</comment>
<comment type="subcellular location">
    <subcellularLocation>
        <location evidence="1">Cell inner membrane</location>
        <topology evidence="1">Multi-pass membrane protein</topology>
    </subcellularLocation>
</comment>
<comment type="similarity">
    <text evidence="1">Belongs to the fluoride channel Fluc/FEX (TC 1.A.43) family.</text>
</comment>
<proteinExistence type="inferred from homology"/>
<accession>Q65QC7</accession>
<dbReference type="EMBL" id="AE016827">
    <property type="protein sequence ID" value="AAU38833.1"/>
    <property type="molecule type" value="Genomic_DNA"/>
</dbReference>
<dbReference type="SMR" id="Q65QC7"/>
<dbReference type="STRING" id="221988.MS2226"/>
<dbReference type="KEGG" id="msu:MS2226"/>
<dbReference type="eggNOG" id="COG0239">
    <property type="taxonomic scope" value="Bacteria"/>
</dbReference>
<dbReference type="HOGENOM" id="CLU_114342_3_3_6"/>
<dbReference type="Proteomes" id="UP000000607">
    <property type="component" value="Chromosome"/>
</dbReference>
<dbReference type="GO" id="GO:0005886">
    <property type="term" value="C:plasma membrane"/>
    <property type="evidence" value="ECO:0007669"/>
    <property type="project" value="UniProtKB-SubCell"/>
</dbReference>
<dbReference type="GO" id="GO:0062054">
    <property type="term" value="F:fluoride channel activity"/>
    <property type="evidence" value="ECO:0007669"/>
    <property type="project" value="UniProtKB-UniRule"/>
</dbReference>
<dbReference type="GO" id="GO:0046872">
    <property type="term" value="F:metal ion binding"/>
    <property type="evidence" value="ECO:0007669"/>
    <property type="project" value="UniProtKB-KW"/>
</dbReference>
<dbReference type="GO" id="GO:0140114">
    <property type="term" value="P:cellular detoxification of fluoride"/>
    <property type="evidence" value="ECO:0007669"/>
    <property type="project" value="UniProtKB-UniRule"/>
</dbReference>
<dbReference type="HAMAP" id="MF_00454">
    <property type="entry name" value="FluC"/>
    <property type="match status" value="1"/>
</dbReference>
<dbReference type="InterPro" id="IPR003691">
    <property type="entry name" value="FluC"/>
</dbReference>
<dbReference type="NCBIfam" id="NF010792">
    <property type="entry name" value="PRK14196.1"/>
    <property type="match status" value="1"/>
</dbReference>
<dbReference type="PANTHER" id="PTHR28259">
    <property type="entry name" value="FLUORIDE EXPORT PROTEIN 1-RELATED"/>
    <property type="match status" value="1"/>
</dbReference>
<dbReference type="PANTHER" id="PTHR28259:SF1">
    <property type="entry name" value="FLUORIDE EXPORT PROTEIN 1-RELATED"/>
    <property type="match status" value="1"/>
</dbReference>
<dbReference type="Pfam" id="PF02537">
    <property type="entry name" value="CRCB"/>
    <property type="match status" value="1"/>
</dbReference>
<protein>
    <recommendedName>
        <fullName evidence="1">Fluoride-specific ion channel FluC</fullName>
    </recommendedName>
</protein>
<name>FLUC_MANSM</name>
<gene>
    <name evidence="1" type="primary">fluC</name>
    <name evidence="1" type="synonym">crcB</name>
    <name type="ordered locus">MS2226</name>
</gene>
<keyword id="KW-0997">Cell inner membrane</keyword>
<keyword id="KW-1003">Cell membrane</keyword>
<keyword id="KW-0407">Ion channel</keyword>
<keyword id="KW-0406">Ion transport</keyword>
<keyword id="KW-0472">Membrane</keyword>
<keyword id="KW-0479">Metal-binding</keyword>
<keyword id="KW-0915">Sodium</keyword>
<keyword id="KW-0812">Transmembrane</keyword>
<keyword id="KW-1133">Transmembrane helix</keyword>
<keyword id="KW-0813">Transport</keyword>